<protein>
    <recommendedName>
        <fullName evidence="1">HTH-type transcriptional repressor PurR</fullName>
    </recommendedName>
    <alternativeName>
        <fullName evidence="1">Pur regulon repressor</fullName>
    </alternativeName>
    <alternativeName>
        <fullName evidence="1">Purine nucleotide synthesis repressor</fullName>
    </alternativeName>
</protein>
<keyword id="KW-0238">DNA-binding</keyword>
<keyword id="KW-0658">Purine biosynthesis</keyword>
<keyword id="KW-0678">Repressor</keyword>
<keyword id="KW-0804">Transcription</keyword>
<keyword id="KW-0805">Transcription regulation</keyword>
<dbReference type="EMBL" id="AM286415">
    <property type="protein sequence ID" value="CAL12228.1"/>
    <property type="molecule type" value="Genomic_DNA"/>
</dbReference>
<dbReference type="RefSeq" id="WP_005165644.1">
    <property type="nucleotide sequence ID" value="NC_008800.1"/>
</dbReference>
<dbReference type="RefSeq" id="YP_001006398.1">
    <property type="nucleotide sequence ID" value="NC_008800.1"/>
</dbReference>
<dbReference type="SMR" id="A1JP52"/>
<dbReference type="GeneID" id="31408948"/>
<dbReference type="KEGG" id="yen:YE2158"/>
<dbReference type="PATRIC" id="fig|393305.7.peg.2323"/>
<dbReference type="eggNOG" id="COG1609">
    <property type="taxonomic scope" value="Bacteria"/>
</dbReference>
<dbReference type="HOGENOM" id="CLU_037628_6_2_6"/>
<dbReference type="OrthoDB" id="9798934at2"/>
<dbReference type="UniPathway" id="UPA00488"/>
<dbReference type="Proteomes" id="UP000000642">
    <property type="component" value="Chromosome"/>
</dbReference>
<dbReference type="GO" id="GO:0003700">
    <property type="term" value="F:DNA-binding transcription factor activity"/>
    <property type="evidence" value="ECO:0007669"/>
    <property type="project" value="TreeGrafter"/>
</dbReference>
<dbReference type="GO" id="GO:0000976">
    <property type="term" value="F:transcription cis-regulatory region binding"/>
    <property type="evidence" value="ECO:0007669"/>
    <property type="project" value="TreeGrafter"/>
</dbReference>
<dbReference type="GO" id="GO:0045892">
    <property type="term" value="P:negative regulation of DNA-templated transcription"/>
    <property type="evidence" value="ECO:0007669"/>
    <property type="project" value="UniProtKB-UniRule"/>
</dbReference>
<dbReference type="GO" id="GO:0006164">
    <property type="term" value="P:purine nucleotide biosynthetic process"/>
    <property type="evidence" value="ECO:0007669"/>
    <property type="project" value="UniProtKB-UniPathway"/>
</dbReference>
<dbReference type="CDD" id="cd01392">
    <property type="entry name" value="HTH_LacI"/>
    <property type="match status" value="1"/>
</dbReference>
<dbReference type="CDD" id="cd06275">
    <property type="entry name" value="PBP1_PurR"/>
    <property type="match status" value="1"/>
</dbReference>
<dbReference type="FunFam" id="1.10.260.40:FF:000002">
    <property type="entry name" value="HTH-type transcriptional repressor PurR"/>
    <property type="match status" value="1"/>
</dbReference>
<dbReference type="FunFam" id="3.40.50.2300:FF:000045">
    <property type="entry name" value="HTH-type transcriptional repressor PurR"/>
    <property type="match status" value="1"/>
</dbReference>
<dbReference type="Gene3D" id="3.40.50.2300">
    <property type="match status" value="2"/>
</dbReference>
<dbReference type="Gene3D" id="1.10.260.40">
    <property type="entry name" value="lambda repressor-like DNA-binding domains"/>
    <property type="match status" value="1"/>
</dbReference>
<dbReference type="HAMAP" id="MF_01277">
    <property type="entry name" value="HTH_type_PurR"/>
    <property type="match status" value="1"/>
</dbReference>
<dbReference type="InterPro" id="IPR000843">
    <property type="entry name" value="HTH_LacI"/>
</dbReference>
<dbReference type="InterPro" id="IPR046335">
    <property type="entry name" value="LacI/GalR-like_sensor"/>
</dbReference>
<dbReference type="InterPro" id="IPR010982">
    <property type="entry name" value="Lambda_DNA-bd_dom_sf"/>
</dbReference>
<dbReference type="InterPro" id="IPR028082">
    <property type="entry name" value="Peripla_BP_I"/>
</dbReference>
<dbReference type="InterPro" id="IPR023588">
    <property type="entry name" value="Tscrpt_reg_HTH_PurR"/>
</dbReference>
<dbReference type="NCBIfam" id="NF007979">
    <property type="entry name" value="PRK10703.1"/>
    <property type="match status" value="1"/>
</dbReference>
<dbReference type="PANTHER" id="PTHR30146:SF148">
    <property type="entry name" value="HTH-TYPE TRANSCRIPTIONAL REPRESSOR PURR-RELATED"/>
    <property type="match status" value="1"/>
</dbReference>
<dbReference type="PANTHER" id="PTHR30146">
    <property type="entry name" value="LACI-RELATED TRANSCRIPTIONAL REPRESSOR"/>
    <property type="match status" value="1"/>
</dbReference>
<dbReference type="Pfam" id="PF00356">
    <property type="entry name" value="LacI"/>
    <property type="match status" value="1"/>
</dbReference>
<dbReference type="Pfam" id="PF13377">
    <property type="entry name" value="Peripla_BP_3"/>
    <property type="match status" value="1"/>
</dbReference>
<dbReference type="PRINTS" id="PR00036">
    <property type="entry name" value="HTHLACI"/>
</dbReference>
<dbReference type="SMART" id="SM00354">
    <property type="entry name" value="HTH_LACI"/>
    <property type="match status" value="1"/>
</dbReference>
<dbReference type="SUPFAM" id="SSF47413">
    <property type="entry name" value="lambda repressor-like DNA-binding domains"/>
    <property type="match status" value="1"/>
</dbReference>
<dbReference type="SUPFAM" id="SSF53822">
    <property type="entry name" value="Periplasmic binding protein-like I"/>
    <property type="match status" value="1"/>
</dbReference>
<dbReference type="PROSITE" id="PS00356">
    <property type="entry name" value="HTH_LACI_1"/>
    <property type="match status" value="1"/>
</dbReference>
<dbReference type="PROSITE" id="PS50932">
    <property type="entry name" value="HTH_LACI_2"/>
    <property type="match status" value="1"/>
</dbReference>
<evidence type="ECO:0000255" key="1">
    <source>
        <dbReference type="HAMAP-Rule" id="MF_01277"/>
    </source>
</evidence>
<name>PURR_YERE8</name>
<sequence length="341" mass="37873">MATIKDVAKHAGVSTTTVSHVINKTRFVAENTKAAVWAAIKELHYSPSAVARSLKVNHTKSIGLLATSSEAPYFAEVIEAVENSCYSKGYTLILCNSHNNLDKQKAYLAMLAQKRVDGLLVMCSEYPEQLLGMLEDYRNIPMVVMDWGTARGDFTDSIIDNAFEGGYLAGRYLIERGHRDIGAIPGQLSRNTGGGRHQGFLKALEEANITLREEWVVQGDFEPESGYKAMHQILTQKHRPTAVFCGGDIMAMGAICAADELGLRVPQDISVIGYDNVRNARYFSPALTTIHQPKERLGETAFAMLLDRIVSKREDPQTIEVHPKLVERRSVADGPFRDYRR</sequence>
<feature type="chain" id="PRO_1000085880" description="HTH-type transcriptional repressor PurR">
    <location>
        <begin position="1"/>
        <end position="341"/>
    </location>
</feature>
<feature type="domain" description="HTH lacI-type" evidence="1">
    <location>
        <begin position="2"/>
        <end position="56"/>
    </location>
</feature>
<feature type="DNA-binding region" description="H-T-H motif" evidence="1">
    <location>
        <begin position="4"/>
        <end position="23"/>
    </location>
</feature>
<feature type="DNA-binding region" evidence="1">
    <location>
        <begin position="48"/>
        <end position="56"/>
    </location>
</feature>
<feature type="binding site" evidence="1">
    <location>
        <position position="73"/>
    </location>
    <ligand>
        <name>hypoxanthine</name>
        <dbReference type="ChEBI" id="CHEBI:17368"/>
    </ligand>
</feature>
<feature type="binding site" evidence="1">
    <location>
        <position position="190"/>
    </location>
    <ligand>
        <name>hypoxanthine</name>
        <dbReference type="ChEBI" id="CHEBI:17368"/>
    </ligand>
</feature>
<feature type="binding site" evidence="1">
    <location>
        <position position="192"/>
    </location>
    <ligand>
        <name>hypoxanthine</name>
        <dbReference type="ChEBI" id="CHEBI:17368"/>
    </ligand>
</feature>
<feature type="binding site" evidence="1">
    <location>
        <position position="221"/>
    </location>
    <ligand>
        <name>hypoxanthine</name>
        <dbReference type="ChEBI" id="CHEBI:17368"/>
    </ligand>
</feature>
<feature type="binding site" evidence="1">
    <location>
        <position position="275"/>
    </location>
    <ligand>
        <name>hypoxanthine</name>
        <dbReference type="ChEBI" id="CHEBI:17368"/>
    </ligand>
</feature>
<proteinExistence type="inferred from homology"/>
<reference key="1">
    <citation type="journal article" date="2006" name="PLoS Genet.">
        <title>The complete genome sequence and comparative genome analysis of the high pathogenicity Yersinia enterocolitica strain 8081.</title>
        <authorList>
            <person name="Thomson N.R."/>
            <person name="Howard S."/>
            <person name="Wren B.W."/>
            <person name="Holden M.T.G."/>
            <person name="Crossman L."/>
            <person name="Challis G.L."/>
            <person name="Churcher C."/>
            <person name="Mungall K."/>
            <person name="Brooks K."/>
            <person name="Chillingworth T."/>
            <person name="Feltwell T."/>
            <person name="Abdellah Z."/>
            <person name="Hauser H."/>
            <person name="Jagels K."/>
            <person name="Maddison M."/>
            <person name="Moule S."/>
            <person name="Sanders M."/>
            <person name="Whitehead S."/>
            <person name="Quail M.A."/>
            <person name="Dougan G."/>
            <person name="Parkhill J."/>
            <person name="Prentice M.B."/>
        </authorList>
    </citation>
    <scope>NUCLEOTIDE SEQUENCE [LARGE SCALE GENOMIC DNA]</scope>
    <source>
        <strain>NCTC 13174 / 8081</strain>
    </source>
</reference>
<organism>
    <name type="scientific">Yersinia enterocolitica serotype O:8 / biotype 1B (strain NCTC 13174 / 8081)</name>
    <dbReference type="NCBI Taxonomy" id="393305"/>
    <lineage>
        <taxon>Bacteria</taxon>
        <taxon>Pseudomonadati</taxon>
        <taxon>Pseudomonadota</taxon>
        <taxon>Gammaproteobacteria</taxon>
        <taxon>Enterobacterales</taxon>
        <taxon>Yersiniaceae</taxon>
        <taxon>Yersinia</taxon>
    </lineage>
</organism>
<comment type="function">
    <text evidence="1">Is the main repressor of the genes involved in the de novo synthesis of purine nucleotides, regulating purB, purC, purEK, purF, purHD, purL, purMN and guaBA expression. PurR is allosterically activated to bind its cognate DNA by binding the purine corepressors, hypoxanthine or guanine, thereby effecting transcription repression.</text>
</comment>
<comment type="pathway">
    <text>Purine metabolism; purine nucleotide biosynthesis [regulation].</text>
</comment>
<comment type="subunit">
    <text evidence="1">Homodimer.</text>
</comment>
<comment type="domain">
    <text evidence="1">Consists of two structural and functional domains: an N-terminal DNA-binding domain, approximately the first 60 residues, and a larger C-terminal domain, approximately 280 residues, which imparts the function of corepressor binding and oligomerization.</text>
</comment>
<accession>A1JP52</accession>
<gene>
    <name evidence="1" type="primary">purR</name>
    <name type="ordered locus">YE2158</name>
</gene>